<evidence type="ECO:0000255" key="1">
    <source>
        <dbReference type="HAMAP-Rule" id="MF_01423"/>
    </source>
</evidence>
<feature type="chain" id="PRO_1000145664" description="Multidrug resistance protein MdtB">
    <location>
        <begin position="1"/>
        <end position="1040"/>
    </location>
</feature>
<feature type="transmembrane region" description="Helical" evidence="1">
    <location>
        <begin position="25"/>
        <end position="45"/>
    </location>
</feature>
<feature type="transmembrane region" description="Helical" evidence="1">
    <location>
        <begin position="347"/>
        <end position="367"/>
    </location>
</feature>
<feature type="transmembrane region" description="Helical" evidence="1">
    <location>
        <begin position="369"/>
        <end position="389"/>
    </location>
</feature>
<feature type="transmembrane region" description="Helical" evidence="1">
    <location>
        <begin position="396"/>
        <end position="416"/>
    </location>
</feature>
<feature type="transmembrane region" description="Helical" evidence="1">
    <location>
        <begin position="440"/>
        <end position="460"/>
    </location>
</feature>
<feature type="transmembrane region" description="Helical" evidence="1">
    <location>
        <begin position="472"/>
        <end position="492"/>
    </location>
</feature>
<feature type="transmembrane region" description="Helical" evidence="1">
    <location>
        <begin position="537"/>
        <end position="557"/>
    </location>
</feature>
<feature type="transmembrane region" description="Helical" evidence="1">
    <location>
        <begin position="863"/>
        <end position="883"/>
    </location>
</feature>
<feature type="transmembrane region" description="Helical" evidence="1">
    <location>
        <begin position="888"/>
        <end position="908"/>
    </location>
</feature>
<feature type="transmembrane region" description="Helical" evidence="1">
    <location>
        <begin position="910"/>
        <end position="930"/>
    </location>
</feature>
<feature type="transmembrane region" description="Helical" evidence="1">
    <location>
        <begin position="968"/>
        <end position="988"/>
    </location>
</feature>
<feature type="transmembrane region" description="Helical" evidence="1">
    <location>
        <begin position="998"/>
        <end position="1018"/>
    </location>
</feature>
<name>MDTB_SALSV</name>
<organism>
    <name type="scientific">Salmonella schwarzengrund (strain CVM19633)</name>
    <dbReference type="NCBI Taxonomy" id="439843"/>
    <lineage>
        <taxon>Bacteria</taxon>
        <taxon>Pseudomonadati</taxon>
        <taxon>Pseudomonadota</taxon>
        <taxon>Gammaproteobacteria</taxon>
        <taxon>Enterobacterales</taxon>
        <taxon>Enterobacteriaceae</taxon>
        <taxon>Salmonella</taxon>
    </lineage>
</organism>
<proteinExistence type="inferred from homology"/>
<sequence>MQVLPPGSTGGPSRLFILRPVATTLLMAAILLAGIIGYRFLPVAALPEVDYPTIQVVTLYPGASPDVMTSAVTAPLERQFGQMSGLKQMSSQSSGGASVVTLQFQLTLPLDVAEQEVQAAINAATNLLPSDLPNPPIYSKVNPADPPIMTLAVTSNAMPMTQVEDMVETRVAQKISQVSGVGLVTLAGGQRPAVRVKLNAQAVAALGLTSETVRTAITGANVNSAKGSLDGPERAVTLSANDQMQSADDYRRLIIAYQNGAPVRLGDVATVEQGAENSWLGAWANQAPANVMNVQRQPGANIIATADSIRQMLPQLTESLPKSVKVTVLSDRTTNIRASVRDTQFELMLAIALVVMIIYLFLRNIPATIIPGVAVPLSLIGTFAVMVFLDFSINNLTLMALTIATGFVVDDAIVVIENISRYIEKGEKPLAAALKGAGEIGFTIISLTFSLIAVLIPLLFMGDIVGRLFREFAVTLAVAILISAVVSLTLTPMMCARMLSQQSLRKQNRFSRACERMFDRVIASYGRGLAKVLNHPWLTLSVAFATLLLSVMLWIVIPKGFFPVQDNGIIQGTLQAPQSSSYASMAQRQRQVAERILQDPAVQSLTTFVGVDGANPTLNSARLQINLKPLDARDDRVQQVISRLQTAVATIPGVALYLQPTQDLTIDTQVSRTQYQFTLQATTLDALSHWVPKLQNALQSLPQLSEVSSDWQDRGLAAWVNVDRDSASRLGISMADVDNALYNAFGQRLISTIYTQANQYRVVLEHNTASTPGLAALETIRLTSRDGGTVPLSAIARIEQRFAPLSINHLDQFPVTTFSFNVPEGYSLGDAVQAILDTEKTLALPADITTQFQGSTLAFQAALGSTVWLIVAAVVAMYIVLGVLYESFIHPITILSTLPTAGVGALLALIIAGSELDIIAIIGIILLIGIVKKNAIMMIDFALAAEREQGMSPRDAIFQACLLRFRPILMTTLAALLGALPLMLSTGVGAELRRPLGIAMVGGLLVSQVLTLFTTPVIYLLFDRLSLYVKSRFPRHKEEA</sequence>
<dbReference type="EMBL" id="CP001127">
    <property type="protein sequence ID" value="ACF89768.1"/>
    <property type="molecule type" value="Genomic_DNA"/>
</dbReference>
<dbReference type="RefSeq" id="WP_001197792.1">
    <property type="nucleotide sequence ID" value="NC_011094.1"/>
</dbReference>
<dbReference type="SMR" id="B4TNI6"/>
<dbReference type="KEGG" id="sew:SeSA_A2364"/>
<dbReference type="HOGENOM" id="CLU_002755_1_1_6"/>
<dbReference type="Proteomes" id="UP000001865">
    <property type="component" value="Chromosome"/>
</dbReference>
<dbReference type="GO" id="GO:0005886">
    <property type="term" value="C:plasma membrane"/>
    <property type="evidence" value="ECO:0007669"/>
    <property type="project" value="UniProtKB-SubCell"/>
</dbReference>
<dbReference type="GO" id="GO:0042910">
    <property type="term" value="F:xenobiotic transmembrane transporter activity"/>
    <property type="evidence" value="ECO:0007669"/>
    <property type="project" value="TreeGrafter"/>
</dbReference>
<dbReference type="FunFam" id="1.20.1640.10:FF:000001">
    <property type="entry name" value="Efflux pump membrane transporter"/>
    <property type="match status" value="1"/>
</dbReference>
<dbReference type="FunFam" id="3.30.70.1430:FF:000001">
    <property type="entry name" value="Efflux pump membrane transporter"/>
    <property type="match status" value="1"/>
</dbReference>
<dbReference type="FunFam" id="3.30.2090.10:FF:000003">
    <property type="entry name" value="Multidrug resistance protein MdtB"/>
    <property type="match status" value="1"/>
</dbReference>
<dbReference type="Gene3D" id="3.30.70.1430">
    <property type="entry name" value="Multidrug efflux transporter AcrB pore domain"/>
    <property type="match status" value="2"/>
</dbReference>
<dbReference type="Gene3D" id="3.30.70.1440">
    <property type="entry name" value="Multidrug efflux transporter AcrB pore domain"/>
    <property type="match status" value="1"/>
</dbReference>
<dbReference type="Gene3D" id="3.30.70.1320">
    <property type="entry name" value="Multidrug efflux transporter AcrB pore domain like"/>
    <property type="match status" value="1"/>
</dbReference>
<dbReference type="Gene3D" id="3.30.2090.10">
    <property type="entry name" value="Multidrug efflux transporter AcrB TolC docking domain, DN and DC subdomains"/>
    <property type="match status" value="2"/>
</dbReference>
<dbReference type="Gene3D" id="1.20.1640.10">
    <property type="entry name" value="Multidrug efflux transporter AcrB transmembrane domain"/>
    <property type="match status" value="2"/>
</dbReference>
<dbReference type="HAMAP" id="MF_01423">
    <property type="entry name" value="MdtB"/>
    <property type="match status" value="1"/>
</dbReference>
<dbReference type="InterPro" id="IPR027463">
    <property type="entry name" value="AcrB_DN_DC_subdom"/>
</dbReference>
<dbReference type="InterPro" id="IPR001036">
    <property type="entry name" value="Acrflvin-R"/>
</dbReference>
<dbReference type="InterPro" id="IPR022831">
    <property type="entry name" value="Multidrug-R_MdtB"/>
</dbReference>
<dbReference type="NCBIfam" id="NF007798">
    <property type="entry name" value="PRK10503.1"/>
    <property type="match status" value="1"/>
</dbReference>
<dbReference type="NCBIfam" id="NF033617">
    <property type="entry name" value="RND_permease_2"/>
    <property type="match status" value="1"/>
</dbReference>
<dbReference type="PANTHER" id="PTHR32063">
    <property type="match status" value="1"/>
</dbReference>
<dbReference type="PANTHER" id="PTHR32063:SF21">
    <property type="entry name" value="MULTIDRUG RESISTANCE PROTEIN MDTB"/>
    <property type="match status" value="1"/>
</dbReference>
<dbReference type="Pfam" id="PF00873">
    <property type="entry name" value="ACR_tran"/>
    <property type="match status" value="1"/>
</dbReference>
<dbReference type="PRINTS" id="PR00702">
    <property type="entry name" value="ACRIFLAVINRP"/>
</dbReference>
<dbReference type="SUPFAM" id="SSF82693">
    <property type="entry name" value="Multidrug efflux transporter AcrB pore domain, PN1, PN2, PC1 and PC2 subdomains"/>
    <property type="match status" value="3"/>
</dbReference>
<dbReference type="SUPFAM" id="SSF82714">
    <property type="entry name" value="Multidrug efflux transporter AcrB TolC docking domain, DN and DC subdomains"/>
    <property type="match status" value="2"/>
</dbReference>
<dbReference type="SUPFAM" id="SSF82866">
    <property type="entry name" value="Multidrug efflux transporter AcrB transmembrane domain"/>
    <property type="match status" value="2"/>
</dbReference>
<keyword id="KW-0997">Cell inner membrane</keyword>
<keyword id="KW-1003">Cell membrane</keyword>
<keyword id="KW-0472">Membrane</keyword>
<keyword id="KW-0812">Transmembrane</keyword>
<keyword id="KW-1133">Transmembrane helix</keyword>
<keyword id="KW-0813">Transport</keyword>
<reference key="1">
    <citation type="journal article" date="2011" name="J. Bacteriol.">
        <title>Comparative genomics of 28 Salmonella enterica isolates: evidence for CRISPR-mediated adaptive sublineage evolution.</title>
        <authorList>
            <person name="Fricke W.F."/>
            <person name="Mammel M.K."/>
            <person name="McDermott P.F."/>
            <person name="Tartera C."/>
            <person name="White D.G."/>
            <person name="Leclerc J.E."/>
            <person name="Ravel J."/>
            <person name="Cebula T.A."/>
        </authorList>
    </citation>
    <scope>NUCLEOTIDE SEQUENCE [LARGE SCALE GENOMIC DNA]</scope>
    <source>
        <strain>CVM19633</strain>
    </source>
</reference>
<gene>
    <name evidence="1" type="primary">mdtB</name>
    <name type="ordered locus">SeSA_A2364</name>
</gene>
<protein>
    <recommendedName>
        <fullName evidence="1">Multidrug resistance protein MdtB</fullName>
    </recommendedName>
    <alternativeName>
        <fullName evidence="1">Multidrug transporter MdtB</fullName>
    </alternativeName>
</protein>
<comment type="subunit">
    <text evidence="1">Part of a tripartite efflux system composed of MdtA, MdtB and MdtC. MdtB forms a heteromultimer with MdtC.</text>
</comment>
<comment type="subcellular location">
    <subcellularLocation>
        <location evidence="1">Cell inner membrane</location>
        <topology evidence="1">Multi-pass membrane protein</topology>
    </subcellularLocation>
</comment>
<comment type="similarity">
    <text evidence="1">Belongs to the resistance-nodulation-cell division (RND) (TC 2.A.6) family. MdtB subfamily.</text>
</comment>
<accession>B4TNI6</accession>